<name>NTNH_NECSZ</name>
<reference key="1">
    <citation type="journal article" date="2018" name="Angew. Chem. Int. Ed.">
        <title>Genome mining and comparative biosynthesis of meroterpenoids from two phylogenetically distinct fungi.</title>
        <authorList>
            <person name="Zhang X."/>
            <person name="Wang T.T."/>
            <person name="Xu Q.L."/>
            <person name="Xiong Y."/>
            <person name="Zhang L."/>
            <person name="Han H."/>
            <person name="Xu K."/>
            <person name="Guo W.J."/>
            <person name="Xu Q."/>
            <person name="Tan R.X."/>
            <person name="Ge H.M."/>
        </authorList>
    </citation>
    <scope>NUCLEOTIDE SEQUENCE [MRNA]</scope>
    <scope>DOMAIN</scope>
    <scope>FUNCTION</scope>
    <scope>PATHWAY</scope>
    <source>
        <strain>Z14-w</strain>
    </source>
</reference>
<evidence type="ECO:0000255" key="1"/>
<evidence type="ECO:0000255" key="2">
    <source>
        <dbReference type="PROSITE-ProRule" id="PRU00258"/>
    </source>
</evidence>
<evidence type="ECO:0000255" key="3">
    <source>
        <dbReference type="PROSITE-ProRule" id="PRU01348"/>
    </source>
</evidence>
<evidence type="ECO:0000255" key="4">
    <source>
        <dbReference type="PROSITE-ProRule" id="PRU01363"/>
    </source>
</evidence>
<evidence type="ECO:0000269" key="5">
    <source>
    </source>
</evidence>
<evidence type="ECO:0000303" key="6">
    <source>
    </source>
</evidence>
<evidence type="ECO:0000305" key="7">
    <source>
    </source>
</evidence>
<dbReference type="EC" id="2.3.1.-" evidence="7"/>
<dbReference type="EMBL" id="MH183001">
    <property type="protein sequence ID" value="AYO60868.1"/>
    <property type="molecule type" value="mRNA"/>
</dbReference>
<dbReference type="SMR" id="A0A455M2Y3"/>
<dbReference type="UniPathway" id="UPA00213"/>
<dbReference type="GO" id="GO:0004315">
    <property type="term" value="F:3-oxoacyl-[acyl-carrier-protein] synthase activity"/>
    <property type="evidence" value="ECO:0007669"/>
    <property type="project" value="InterPro"/>
</dbReference>
<dbReference type="GO" id="GO:0004312">
    <property type="term" value="F:fatty acid synthase activity"/>
    <property type="evidence" value="ECO:0007669"/>
    <property type="project" value="TreeGrafter"/>
</dbReference>
<dbReference type="GO" id="GO:0008168">
    <property type="term" value="F:methyltransferase activity"/>
    <property type="evidence" value="ECO:0007669"/>
    <property type="project" value="UniProtKB-KW"/>
</dbReference>
<dbReference type="GO" id="GO:0016491">
    <property type="term" value="F:oxidoreductase activity"/>
    <property type="evidence" value="ECO:0007669"/>
    <property type="project" value="UniProtKB-KW"/>
</dbReference>
<dbReference type="GO" id="GO:0031177">
    <property type="term" value="F:phosphopantetheine binding"/>
    <property type="evidence" value="ECO:0007669"/>
    <property type="project" value="InterPro"/>
</dbReference>
<dbReference type="GO" id="GO:0006633">
    <property type="term" value="P:fatty acid biosynthetic process"/>
    <property type="evidence" value="ECO:0007669"/>
    <property type="project" value="InterPro"/>
</dbReference>
<dbReference type="GO" id="GO:0032259">
    <property type="term" value="P:methylation"/>
    <property type="evidence" value="ECO:0007669"/>
    <property type="project" value="UniProtKB-KW"/>
</dbReference>
<dbReference type="GO" id="GO:0044550">
    <property type="term" value="P:secondary metabolite biosynthetic process"/>
    <property type="evidence" value="ECO:0007669"/>
    <property type="project" value="TreeGrafter"/>
</dbReference>
<dbReference type="GO" id="GO:0016114">
    <property type="term" value="P:terpenoid biosynthetic process"/>
    <property type="evidence" value="ECO:0007669"/>
    <property type="project" value="UniProtKB-UniPathway"/>
</dbReference>
<dbReference type="CDD" id="cd02440">
    <property type="entry name" value="AdoMet_MTases"/>
    <property type="match status" value="1"/>
</dbReference>
<dbReference type="CDD" id="cd05195">
    <property type="entry name" value="enoyl_red"/>
    <property type="match status" value="1"/>
</dbReference>
<dbReference type="CDD" id="cd00833">
    <property type="entry name" value="PKS"/>
    <property type="match status" value="1"/>
</dbReference>
<dbReference type="Gene3D" id="3.40.47.10">
    <property type="match status" value="1"/>
</dbReference>
<dbReference type="Gene3D" id="1.10.1200.10">
    <property type="entry name" value="ACP-like"/>
    <property type="match status" value="1"/>
</dbReference>
<dbReference type="Gene3D" id="3.40.366.10">
    <property type="entry name" value="Malonyl-Coenzyme A Acyl Carrier Protein, domain 2"/>
    <property type="match status" value="1"/>
</dbReference>
<dbReference type="Gene3D" id="3.90.180.10">
    <property type="entry name" value="Medium-chain alcohol dehydrogenases, catalytic domain"/>
    <property type="match status" value="1"/>
</dbReference>
<dbReference type="Gene3D" id="3.40.50.720">
    <property type="entry name" value="NAD(P)-binding Rossmann-like Domain"/>
    <property type="match status" value="2"/>
</dbReference>
<dbReference type="Gene3D" id="3.10.129.110">
    <property type="entry name" value="Polyketide synthase dehydratase"/>
    <property type="match status" value="1"/>
</dbReference>
<dbReference type="Gene3D" id="3.40.50.150">
    <property type="entry name" value="Vaccinia Virus protein VP39"/>
    <property type="match status" value="1"/>
</dbReference>
<dbReference type="InterPro" id="IPR001227">
    <property type="entry name" value="Ac_transferase_dom_sf"/>
</dbReference>
<dbReference type="InterPro" id="IPR036736">
    <property type="entry name" value="ACP-like_sf"/>
</dbReference>
<dbReference type="InterPro" id="IPR014043">
    <property type="entry name" value="Acyl_transferase_dom"/>
</dbReference>
<dbReference type="InterPro" id="IPR016035">
    <property type="entry name" value="Acyl_Trfase/lysoPLipase"/>
</dbReference>
<dbReference type="InterPro" id="IPR013149">
    <property type="entry name" value="ADH-like_C"/>
</dbReference>
<dbReference type="InterPro" id="IPR013154">
    <property type="entry name" value="ADH-like_N"/>
</dbReference>
<dbReference type="InterPro" id="IPR011032">
    <property type="entry name" value="GroES-like_sf"/>
</dbReference>
<dbReference type="InterPro" id="IPR018201">
    <property type="entry name" value="Ketoacyl_synth_AS"/>
</dbReference>
<dbReference type="InterPro" id="IPR014031">
    <property type="entry name" value="Ketoacyl_synth_C"/>
</dbReference>
<dbReference type="InterPro" id="IPR014030">
    <property type="entry name" value="Ketoacyl_synth_N"/>
</dbReference>
<dbReference type="InterPro" id="IPR016036">
    <property type="entry name" value="Malonyl_transacylase_ACP-bd"/>
</dbReference>
<dbReference type="InterPro" id="IPR013217">
    <property type="entry name" value="Methyltransf_12"/>
</dbReference>
<dbReference type="InterPro" id="IPR036291">
    <property type="entry name" value="NAD(P)-bd_dom_sf"/>
</dbReference>
<dbReference type="InterPro" id="IPR032821">
    <property type="entry name" value="PKS_assoc"/>
</dbReference>
<dbReference type="InterPro" id="IPR020841">
    <property type="entry name" value="PKS_Beta-ketoAc_synthase_dom"/>
</dbReference>
<dbReference type="InterPro" id="IPR042104">
    <property type="entry name" value="PKS_dehydratase_sf"/>
</dbReference>
<dbReference type="InterPro" id="IPR020807">
    <property type="entry name" value="PKS_DH"/>
</dbReference>
<dbReference type="InterPro" id="IPR049551">
    <property type="entry name" value="PKS_DH_C"/>
</dbReference>
<dbReference type="InterPro" id="IPR049552">
    <property type="entry name" value="PKS_DH_N"/>
</dbReference>
<dbReference type="InterPro" id="IPR020843">
    <property type="entry name" value="PKS_ER"/>
</dbReference>
<dbReference type="InterPro" id="IPR013968">
    <property type="entry name" value="PKS_KR"/>
</dbReference>
<dbReference type="InterPro" id="IPR049900">
    <property type="entry name" value="PKS_mFAS_DH"/>
</dbReference>
<dbReference type="InterPro" id="IPR050091">
    <property type="entry name" value="PKS_NRPS_Biosynth_Enz"/>
</dbReference>
<dbReference type="InterPro" id="IPR020806">
    <property type="entry name" value="PKS_PP-bd"/>
</dbReference>
<dbReference type="InterPro" id="IPR009081">
    <property type="entry name" value="PP-bd_ACP"/>
</dbReference>
<dbReference type="InterPro" id="IPR029063">
    <property type="entry name" value="SAM-dependent_MTases_sf"/>
</dbReference>
<dbReference type="InterPro" id="IPR016039">
    <property type="entry name" value="Thiolase-like"/>
</dbReference>
<dbReference type="PANTHER" id="PTHR43775">
    <property type="entry name" value="FATTY ACID SYNTHASE"/>
    <property type="match status" value="1"/>
</dbReference>
<dbReference type="PANTHER" id="PTHR43775:SF37">
    <property type="entry name" value="SI:DKEY-61P9.11"/>
    <property type="match status" value="1"/>
</dbReference>
<dbReference type="Pfam" id="PF00698">
    <property type="entry name" value="Acyl_transf_1"/>
    <property type="match status" value="1"/>
</dbReference>
<dbReference type="Pfam" id="PF08240">
    <property type="entry name" value="ADH_N"/>
    <property type="match status" value="1"/>
</dbReference>
<dbReference type="Pfam" id="PF00107">
    <property type="entry name" value="ADH_zinc_N"/>
    <property type="match status" value="1"/>
</dbReference>
<dbReference type="Pfam" id="PF16197">
    <property type="entry name" value="KAsynt_C_assoc"/>
    <property type="match status" value="1"/>
</dbReference>
<dbReference type="Pfam" id="PF00109">
    <property type="entry name" value="ketoacyl-synt"/>
    <property type="match status" value="1"/>
</dbReference>
<dbReference type="Pfam" id="PF02801">
    <property type="entry name" value="Ketoacyl-synt_C"/>
    <property type="match status" value="1"/>
</dbReference>
<dbReference type="Pfam" id="PF08659">
    <property type="entry name" value="KR"/>
    <property type="match status" value="1"/>
</dbReference>
<dbReference type="Pfam" id="PF08242">
    <property type="entry name" value="Methyltransf_12"/>
    <property type="match status" value="1"/>
</dbReference>
<dbReference type="Pfam" id="PF21089">
    <property type="entry name" value="PKS_DH_N"/>
    <property type="match status" value="1"/>
</dbReference>
<dbReference type="Pfam" id="PF14765">
    <property type="entry name" value="PS-DH"/>
    <property type="match status" value="1"/>
</dbReference>
<dbReference type="SMART" id="SM00827">
    <property type="entry name" value="PKS_AT"/>
    <property type="match status" value="1"/>
</dbReference>
<dbReference type="SMART" id="SM00826">
    <property type="entry name" value="PKS_DH"/>
    <property type="match status" value="1"/>
</dbReference>
<dbReference type="SMART" id="SM00829">
    <property type="entry name" value="PKS_ER"/>
    <property type="match status" value="1"/>
</dbReference>
<dbReference type="SMART" id="SM00822">
    <property type="entry name" value="PKS_KR"/>
    <property type="match status" value="1"/>
</dbReference>
<dbReference type="SMART" id="SM00825">
    <property type="entry name" value="PKS_KS"/>
    <property type="match status" value="1"/>
</dbReference>
<dbReference type="SMART" id="SM00823">
    <property type="entry name" value="PKS_PP"/>
    <property type="match status" value="1"/>
</dbReference>
<dbReference type="SUPFAM" id="SSF47336">
    <property type="entry name" value="ACP-like"/>
    <property type="match status" value="1"/>
</dbReference>
<dbReference type="SUPFAM" id="SSF52151">
    <property type="entry name" value="FabD/lysophospholipase-like"/>
    <property type="match status" value="1"/>
</dbReference>
<dbReference type="SUPFAM" id="SSF50129">
    <property type="entry name" value="GroES-like"/>
    <property type="match status" value="1"/>
</dbReference>
<dbReference type="SUPFAM" id="SSF51735">
    <property type="entry name" value="NAD(P)-binding Rossmann-fold domains"/>
    <property type="match status" value="2"/>
</dbReference>
<dbReference type="SUPFAM" id="SSF55048">
    <property type="entry name" value="Probable ACP-binding domain of malonyl-CoA ACP transacylase"/>
    <property type="match status" value="1"/>
</dbReference>
<dbReference type="SUPFAM" id="SSF53335">
    <property type="entry name" value="S-adenosyl-L-methionine-dependent methyltransferases"/>
    <property type="match status" value="1"/>
</dbReference>
<dbReference type="SUPFAM" id="SSF53901">
    <property type="entry name" value="Thiolase-like"/>
    <property type="match status" value="1"/>
</dbReference>
<dbReference type="PROSITE" id="PS50075">
    <property type="entry name" value="CARRIER"/>
    <property type="match status" value="1"/>
</dbReference>
<dbReference type="PROSITE" id="PS00606">
    <property type="entry name" value="KS3_1"/>
    <property type="match status" value="1"/>
</dbReference>
<dbReference type="PROSITE" id="PS52004">
    <property type="entry name" value="KS3_2"/>
    <property type="match status" value="1"/>
</dbReference>
<dbReference type="PROSITE" id="PS52019">
    <property type="entry name" value="PKS_MFAS_DH"/>
    <property type="match status" value="1"/>
</dbReference>
<feature type="chain" id="PRO_0000452558" description="Highly reducing polyketide synthase ntnH">
    <location>
        <begin position="1"/>
        <end position="2371"/>
    </location>
</feature>
<feature type="domain" description="Ketosynthase family 3 (KS3)" evidence="3 7">
    <location>
        <begin position="10"/>
        <end position="429"/>
    </location>
</feature>
<feature type="domain" description="PKS/mFAS DH" evidence="4">
    <location>
        <begin position="858"/>
        <end position="1145"/>
    </location>
</feature>
<feature type="domain" description="Carrier" evidence="2 7">
    <location>
        <begin position="2280"/>
        <end position="2362"/>
    </location>
</feature>
<feature type="region of interest" description="Malonyl-CoA:ACP transacylase (MAT) domain" evidence="1 7">
    <location>
        <begin position="528"/>
        <end position="796"/>
    </location>
</feature>
<feature type="region of interest" description="Dehydratase (DH) domain" evidence="1 7">
    <location>
        <begin position="858"/>
        <end position="1142"/>
    </location>
</feature>
<feature type="region of interest" description="N-terminal hotdog fold" evidence="4">
    <location>
        <begin position="858"/>
        <end position="986"/>
    </location>
</feature>
<feature type="region of interest" description="C-terminal hotdog fold" evidence="4">
    <location>
        <begin position="1001"/>
        <end position="1145"/>
    </location>
</feature>
<feature type="region of interest" description="Methyltransferase (CMet) domain" evidence="1 7">
    <location>
        <begin position="1309"/>
        <end position="1456"/>
    </location>
</feature>
<feature type="region of interest" description="Enoyl reductase (ER) (ER) domain" evidence="1 7">
    <location>
        <begin position="1669"/>
        <end position="1968"/>
    </location>
</feature>
<feature type="region of interest" description="Ketoreductase (KR) domain" evidence="1 7">
    <location>
        <begin position="1993"/>
        <end position="2167"/>
    </location>
</feature>
<feature type="active site" description="For beta-ketoacyl synthase activity" evidence="3">
    <location>
        <position position="180"/>
    </location>
</feature>
<feature type="active site" description="For beta-ketoacyl synthase activity" evidence="3">
    <location>
        <position position="316"/>
    </location>
</feature>
<feature type="active site" description="For beta-ketoacyl synthase activity" evidence="3">
    <location>
        <position position="352"/>
    </location>
</feature>
<feature type="active site" description="Proton acceptor; for dehydratase activity" evidence="4">
    <location>
        <position position="890"/>
    </location>
</feature>
<feature type="active site" description="Proton donor; for dehydratase activity" evidence="4">
    <location>
        <position position="1059"/>
    </location>
</feature>
<feature type="modified residue" description="O-(pantetheine 4'-phosphoryl)serine" evidence="2">
    <location>
        <position position="2322"/>
    </location>
</feature>
<keyword id="KW-0012">Acyltransferase</keyword>
<keyword id="KW-0489">Methyltransferase</keyword>
<keyword id="KW-0511">Multifunctional enzyme</keyword>
<keyword id="KW-0521">NADP</keyword>
<keyword id="KW-0560">Oxidoreductase</keyword>
<keyword id="KW-0596">Phosphopantetheine</keyword>
<keyword id="KW-0597">Phosphoprotein</keyword>
<keyword id="KW-0808">Transferase</keyword>
<sequence length="2371" mass="258694">MIVPETRPGPSPIAIVGIGLRLPGGCHDAQSYWDLLVHQKDARKPIPPERFNIDGFHKESDGVGSLSMRHGYFLDEPADRFDAGFFSMSQTEVARVDPQQRLLLEVMHEALENAGEVGWRGSNIAVYAGSFGQDWLQMQARDPQDGNVYGITGMDDFVLANRVSYEFDLHGPSMTVKAGCSSSLIALDLACEALQRGDCSGALVGASNLLLSPEYFLALDNLGALSSAGSSNTFDTNASGYARADAVNAVYVKRLDDALRDGNPIRAIVRSTAVNSDGKTVGLTNPSTDAQARLIRRAYEKAGIINPGETPVVECHGTGTATGDPQEVAAVVQVFSVMKLTQIPQVKPNIGHGEGAAGLSSLIKAVLSLERNTIPPNIKFTTPNPKIPFTEARLVVPTKATPWPKGRSRRISVDSFGLGGANAHVILEGYSTTPSPHRNGIPKVNGHTKTSTLQRLLVFSAHNETSIAKMTSNYQAFTESESYRVKDLAYTLGARRSHHKWRSFCITDGKSLQPTPAVRSSDPKGLLFIFTGQGAQWSDVLLNSQEISSAEYAQPLCTAIQIGLTNLLREWKITPDGVVGHSSGEIAAAYAVGALEMRDAIHVAFYRGVASSQQKRPGAMAAVGLGRHEVSNLLSAGTTIACENSRSSVTISGDYDAVEDTLDRVRQYWPDALARKLKIDRAYHSDHMRSVGILYEELISEIKTSTKSLTIPFFSSVTGQATYDASLLGPTYWRANMERPVLFLSAVENALDSMQEFGLALELGPHSALSGPFRQICKELDKRIIYNSCLSRGADATTTILTAIGQLYCQGLAPDFSALNPGGVTMSNLPPYPWTHDASYWNESRISREFRTRPHPEHELLGARVIGGNDMEPSWRKLLNLKEVAWLSDHVVAEDVVFPAAGYVAMAGEAIKQITGTAGFTIRSLSIGSAMPLNNARATEIITRLQPHRLTDDQDSTWFDFSVMSYDGNTWTRHCNGKVHPGNASTLSMEEKKSSPAEDGVRGVISAKWYQAAKAAGLEYGPTFQGLQDASYNVTRDCISSTLQTPLQTSSVLHPTTMDQLLQCCILGSVKGHLRLMSKLVLPVHIDEMYIADSHSFEGLYCETHSDFTGADMMEARGHIRVGNGSLALQAKGIRFRILENNRSKENALQELRLLEWRPSIDLVDLRQLVQQTTDLSGCLELVERLNILCVLGTTRILKSMENTQHHFKRFKEWNEEYVNNIRLNGSNVVQDTDHIFEMTSAECEFAIKELTAEALETPARDIALAITRIFYDVENIFTGAAEPLAVLLRDDLLMKIYNFFNMLDHRHFFQLLGHNKKTLRIIEIGAGTGGFTSTIVPALTDSAGGCLFSTYTYTDISSGFFKAAKERFSEYPGIEYTVLDISEDPASQGLELNSYDLVVAANAKAKWVNYIMGTLSGWWLGEPDGRINEPYIQAQQWDDILQKAGFENVTAIMDQSPPFQLDNIVIANAVDDALAPPKALSLLVPDTTQVAGPAAELVSKFQSEGYEVSLCSLWDLPTAPLDIVSLLDIMEPQTFFQGLTDRDLRGLIRFITHTHGQKLLWLTGPAQISTKDPHSAMVLGFARTLRLELGTIFATMELDIAAEPSPWNSVVEVFAKLQSQGTDDLVDCEYALVDGTVQVPRYITRSSEAVLPVASEQISRQLHVAKPGLLSSLQWQGSSREAELKEGELEIAVRASSVNYQDALLALGHVHSNHGLGLDCAGIVTHINSRAGKDNLQVGDRVLCWSAGSLSTHVRADSQRCIKIPDTLNFDVAVTMPTTYGTMIRGLIEIDAMGVAAIQIARMQGAEIYATAATEEEKHFLTTEHDIPMSRIFSSQDNSFVTAIMHDTQSRGVDIVVNSLSGELLHESWKCVAEGGNMIDISGKDVSGHGKLDMALFNGNRGFHGLDMASLVSKKPSLTRRLLEASIKLYTDGLVKPIRPITRFSTSDVKHAFHQFQGHRPIGAICIEFPDDPLSFPIDSFDDKTRFREDRSYVLIGGLGGLGRSAAVWLAERGAGSIIFMSRSASPSVESTSLVRELKALGCEVQIFTGSVTDASAVENLVANAAKPIAGMLHLALVLKDEAVLDMTFDSWQGATEAKVQGTWNLHNALKDQPLDFFILLSSIYGVQGNPKQANYAAASTFLDAFVQFRQQLGLPASVIDLGVMEDIGFVSQHPTILENLRRAGAQLIRENDFIGALQLAVRASSQPAPAPPTLASGYVNRAQFVVGLGQHPPDARGLGLKVDGTIQGQNNTQAVAKEDGDALKQFMENATRDPSSLEDETAVAEFLAAQVAECLKTLLIFSDSSDLNLKLGLAELGVDSLIAIELQTWWIQNFATNVTILELTKSASVMDLGKLARSRILEELHGRDG</sequence>
<proteinExistence type="evidence at transcript level"/>
<gene>
    <name evidence="6" type="primary">ntnH</name>
</gene>
<comment type="function">
    <text evidence="5 7">Highly reducing polyketide synthase; part of the gene cluster that mediates the biosynthesis of the meroterpenoids nectripenoids A and B, as well as cochliquninone D and isocochliquninone E (PubMed:29797385). The pathway probably begins with the HR-PKS ntnH that catalyzes two chain-extension steps to form a reduced triketide, which then primes the SAT domain in the NR-PKS ntnG to initiate three more cycles of extension to give a linear hexaketide corresponding to the polyketide part of nectripenoids (Probable). The FAD-dependent monooxygenase ntnJ then performs an oxidative decarboxylation at C11 of the ntnH/ntnG product, via an electrophilic aromatic hydroxylation with concomitant ipso-decarboxylation (Probable). The membrane-bound polyprenyl transferase ntnF then introduces a farnesyl group before the FAD-dependent monooxygenase ntnK functions as the first epoxidase on terminal C12'-C13' olefin, followed by a second epoxidation on C7'-C8' catalyzed by ntnA (Probable). The terpene cyclase/mutase ntnI then initiates the sequential tricyclic ring formation through protonation of the terminal epoxide and catalyzes the regioselective and stereoselective 6/6/6-tricyclic ring formation (Probable). The cytochrome P450 monooxygenase ntnM may then hydroxylate C1' (Probable).</text>
</comment>
<comment type="pathway">
    <text evidence="7">Secondary metabolite biosynthesis; terpenoid biosynthesis.</text>
</comment>
<comment type="domain">
    <text evidence="7">Multidomain protein; including a ketosynthase (KS) that catalyzes repeated decarboxylative condensation to elongate the polyketide backbone; a malonyl-CoA:ACP transacylase (MAT) that selects and transfers the extender unit malonyl-CoA; a dehydratase (DH) domain that reduces hydroxyl groups to enoyl groups; a methyltransferase (CMeT) domain responsible for the incorporation of methyl groups; an enoylreductase (ER) domain that reduces enoyl groups to alkyl group; a ketoreductase (KR) domain that catalyzes beta-ketoreduction steps; and an acyl-carrier protein (ACP) that serves as the tether of the growing and completed polyketide via its phosphopantetheinyl arm.</text>
</comment>
<comment type="domain">
    <text evidence="7">The lack of conserved catalytic residues in the ER domain supports the fact that nectripenoids retain an alkene at C2-C3.</text>
</comment>
<accession>A0A455M2Y3</accession>
<organism>
    <name type="scientific">Nectria sp</name>
    <dbReference type="NCBI Taxonomy" id="1755444"/>
    <lineage>
        <taxon>Eukaryota</taxon>
        <taxon>Fungi</taxon>
        <taxon>Dikarya</taxon>
        <taxon>Ascomycota</taxon>
        <taxon>Pezizomycotina</taxon>
        <taxon>Sordariomycetes</taxon>
        <taxon>Hypocreomycetidae</taxon>
        <taxon>Hypocreales</taxon>
        <taxon>Nectriaceae</taxon>
        <taxon>Nectria</taxon>
    </lineage>
</organism>
<protein>
    <recommendedName>
        <fullName evidence="6">Highly reducing polyketide synthase ntnH</fullName>
        <shortName evidence="6">HR-PKS ntnH</shortName>
        <ecNumber evidence="7">2.3.1.-</ecNumber>
    </recommendedName>
    <alternativeName>
        <fullName evidence="6">Nectripenoid biosynthesis cluster protein H</fullName>
    </alternativeName>
</protein>